<reference key="1">
    <citation type="journal article" date="2001" name="Nature">
        <title>Genome sequence of enterohaemorrhagic Escherichia coli O157:H7.</title>
        <authorList>
            <person name="Perna N.T."/>
            <person name="Plunkett G. III"/>
            <person name="Burland V."/>
            <person name="Mau B."/>
            <person name="Glasner J.D."/>
            <person name="Rose D.J."/>
            <person name="Mayhew G.F."/>
            <person name="Evans P.S."/>
            <person name="Gregor J."/>
            <person name="Kirkpatrick H.A."/>
            <person name="Posfai G."/>
            <person name="Hackett J."/>
            <person name="Klink S."/>
            <person name="Boutin A."/>
            <person name="Shao Y."/>
            <person name="Miller L."/>
            <person name="Grotbeck E.J."/>
            <person name="Davis N.W."/>
            <person name="Lim A."/>
            <person name="Dimalanta E.T."/>
            <person name="Potamousis K."/>
            <person name="Apodaca J."/>
            <person name="Anantharaman T.S."/>
            <person name="Lin J."/>
            <person name="Yen G."/>
            <person name="Schwartz D.C."/>
            <person name="Welch R.A."/>
            <person name="Blattner F.R."/>
        </authorList>
    </citation>
    <scope>NUCLEOTIDE SEQUENCE [LARGE SCALE GENOMIC DNA]</scope>
    <source>
        <strain>O157:H7 / EDL933 / ATCC 700927 / EHEC</strain>
    </source>
</reference>
<reference key="2">
    <citation type="journal article" date="2001" name="DNA Res.">
        <title>Complete genome sequence of enterohemorrhagic Escherichia coli O157:H7 and genomic comparison with a laboratory strain K-12.</title>
        <authorList>
            <person name="Hayashi T."/>
            <person name="Makino K."/>
            <person name="Ohnishi M."/>
            <person name="Kurokawa K."/>
            <person name="Ishii K."/>
            <person name="Yokoyama K."/>
            <person name="Han C.-G."/>
            <person name="Ohtsubo E."/>
            <person name="Nakayama K."/>
            <person name="Murata T."/>
            <person name="Tanaka M."/>
            <person name="Tobe T."/>
            <person name="Iida T."/>
            <person name="Takami H."/>
            <person name="Honda T."/>
            <person name="Sasakawa C."/>
            <person name="Ogasawara N."/>
            <person name="Yasunaga T."/>
            <person name="Kuhara S."/>
            <person name="Shiba T."/>
            <person name="Hattori M."/>
            <person name="Shinagawa H."/>
        </authorList>
    </citation>
    <scope>NUCLEOTIDE SEQUENCE [LARGE SCALE GENOMIC DNA]</scope>
    <source>
        <strain>O157:H7 / Sakai / RIMD 0509952 / EHEC</strain>
    </source>
</reference>
<comment type="function">
    <text evidence="2">Catalyzes the complicated ring closure reaction between the two acyclic compounds 1-deoxy-D-xylulose-5-phosphate (DXP) and 3-amino-2-oxopropyl phosphate (1-amino-acetone-3-phosphate or AAP) to form pyridoxine 5'-phosphate (PNP) and inorganic phosphate.</text>
</comment>
<comment type="catalytic activity">
    <reaction evidence="2">
        <text>3-amino-2-oxopropyl phosphate + 1-deoxy-D-xylulose 5-phosphate = pyridoxine 5'-phosphate + phosphate + 2 H2O + H(+)</text>
        <dbReference type="Rhea" id="RHEA:15265"/>
        <dbReference type="ChEBI" id="CHEBI:15377"/>
        <dbReference type="ChEBI" id="CHEBI:15378"/>
        <dbReference type="ChEBI" id="CHEBI:43474"/>
        <dbReference type="ChEBI" id="CHEBI:57279"/>
        <dbReference type="ChEBI" id="CHEBI:57792"/>
        <dbReference type="ChEBI" id="CHEBI:58589"/>
        <dbReference type="EC" id="2.6.99.2"/>
    </reaction>
</comment>
<comment type="pathway">
    <text evidence="2">Cofactor biosynthesis; pyridoxine 5'-phosphate biosynthesis; pyridoxine 5'-phosphate from D-erythrose 4-phosphate: step 5/5.</text>
</comment>
<comment type="subunit">
    <text evidence="2">Homooctamer; tetramer of dimers.</text>
</comment>
<comment type="subcellular location">
    <subcellularLocation>
        <location evidence="2">Cytoplasm</location>
    </subcellularLocation>
</comment>
<comment type="similarity">
    <text evidence="2">Belongs to the PNP synthase family.</text>
</comment>
<protein>
    <recommendedName>
        <fullName evidence="2">Pyridoxine 5'-phosphate synthase</fullName>
        <shortName evidence="2">PNP synthase</shortName>
        <ecNumber evidence="2">2.6.99.2</ecNumber>
    </recommendedName>
</protein>
<feature type="initiator methionine" description="Removed" evidence="1">
    <location>
        <position position="1"/>
    </location>
</feature>
<feature type="chain" id="PRO_0000190115" description="Pyridoxine 5'-phosphate synthase">
    <location>
        <begin position="2"/>
        <end position="243"/>
    </location>
</feature>
<feature type="active site" description="Proton acceptor" evidence="2">
    <location>
        <position position="45"/>
    </location>
</feature>
<feature type="active site" description="Proton acceptor" evidence="2">
    <location>
        <position position="72"/>
    </location>
</feature>
<feature type="active site" description="Proton donor" evidence="2">
    <location>
        <position position="193"/>
    </location>
</feature>
<feature type="binding site" evidence="2">
    <location>
        <position position="9"/>
    </location>
    <ligand>
        <name>3-amino-2-oxopropyl phosphate</name>
        <dbReference type="ChEBI" id="CHEBI:57279"/>
    </ligand>
</feature>
<feature type="binding site" evidence="2">
    <location>
        <begin position="11"/>
        <end position="12"/>
    </location>
    <ligand>
        <name>1-deoxy-D-xylulose 5-phosphate</name>
        <dbReference type="ChEBI" id="CHEBI:57792"/>
    </ligand>
</feature>
<feature type="binding site" evidence="2">
    <location>
        <position position="20"/>
    </location>
    <ligand>
        <name>3-amino-2-oxopropyl phosphate</name>
        <dbReference type="ChEBI" id="CHEBI:57279"/>
    </ligand>
</feature>
<feature type="binding site" evidence="2">
    <location>
        <position position="47"/>
    </location>
    <ligand>
        <name>1-deoxy-D-xylulose 5-phosphate</name>
        <dbReference type="ChEBI" id="CHEBI:57792"/>
    </ligand>
</feature>
<feature type="binding site" evidence="2">
    <location>
        <position position="52"/>
    </location>
    <ligand>
        <name>1-deoxy-D-xylulose 5-phosphate</name>
        <dbReference type="ChEBI" id="CHEBI:57792"/>
    </ligand>
</feature>
<feature type="binding site" evidence="2">
    <location>
        <position position="102"/>
    </location>
    <ligand>
        <name>1-deoxy-D-xylulose 5-phosphate</name>
        <dbReference type="ChEBI" id="CHEBI:57792"/>
    </ligand>
</feature>
<feature type="binding site" evidence="2">
    <location>
        <position position="194"/>
    </location>
    <ligand>
        <name>3-amino-2-oxopropyl phosphate</name>
        <dbReference type="ChEBI" id="CHEBI:57279"/>
    </ligand>
</feature>
<feature type="binding site" evidence="2">
    <location>
        <begin position="215"/>
        <end position="216"/>
    </location>
    <ligand>
        <name>3-amino-2-oxopropyl phosphate</name>
        <dbReference type="ChEBI" id="CHEBI:57279"/>
    </ligand>
</feature>
<feature type="site" description="Transition state stabilizer" evidence="2">
    <location>
        <position position="153"/>
    </location>
</feature>
<sequence>MAELLLGVNIDHIATLRNARGTAYPDPVQAAFIAEQAGADGITVHLREDRRHITDRDVRILRQTLDTRMNLEMAVTEEMLAIAVETKPHFCCLVPEKRQEVTTEGGLDVAGQRDKMRDACKRLADAGIQVSLFIDADEEQIKAAAEVGAPFIEIHTGCYADAKTDAEQAQELARIAKAATFAASLGLKVNAGHGLTYHNVKAIAAIPEMHELNIGHAIIGRAVMTGLKDAVAEMKRLMLEARG</sequence>
<accession>P0A795</accession>
<accession>P24223</accession>
<dbReference type="EC" id="2.6.99.2" evidence="2"/>
<dbReference type="EMBL" id="AE005174">
    <property type="protein sequence ID" value="AAG57679.1"/>
    <property type="molecule type" value="Genomic_DNA"/>
</dbReference>
<dbReference type="EMBL" id="BA000007">
    <property type="protein sequence ID" value="BAB36853.1"/>
    <property type="molecule type" value="Genomic_DNA"/>
</dbReference>
<dbReference type="PIR" id="F91057">
    <property type="entry name" value="F91057"/>
</dbReference>
<dbReference type="RefSeq" id="NP_311457.1">
    <property type="nucleotide sequence ID" value="NC_002695.1"/>
</dbReference>
<dbReference type="RefSeq" id="WP_001297412.1">
    <property type="nucleotide sequence ID" value="NZ_VOAI01000001.1"/>
</dbReference>
<dbReference type="SMR" id="P0A795"/>
<dbReference type="STRING" id="155864.Z3845"/>
<dbReference type="GeneID" id="86860685"/>
<dbReference type="GeneID" id="914900"/>
<dbReference type="KEGG" id="ece:Z3845"/>
<dbReference type="KEGG" id="ecs:ECs_3430"/>
<dbReference type="PATRIC" id="fig|386585.9.peg.3584"/>
<dbReference type="eggNOG" id="COG0854">
    <property type="taxonomic scope" value="Bacteria"/>
</dbReference>
<dbReference type="HOGENOM" id="CLU_074563_0_0_6"/>
<dbReference type="OMA" id="ERHIRYQ"/>
<dbReference type="UniPathway" id="UPA00244">
    <property type="reaction ID" value="UER00313"/>
</dbReference>
<dbReference type="Proteomes" id="UP000000558">
    <property type="component" value="Chromosome"/>
</dbReference>
<dbReference type="Proteomes" id="UP000002519">
    <property type="component" value="Chromosome"/>
</dbReference>
<dbReference type="GO" id="GO:0005829">
    <property type="term" value="C:cytosol"/>
    <property type="evidence" value="ECO:0007669"/>
    <property type="project" value="TreeGrafter"/>
</dbReference>
<dbReference type="GO" id="GO:0033856">
    <property type="term" value="F:pyridoxine 5'-phosphate synthase activity"/>
    <property type="evidence" value="ECO:0007669"/>
    <property type="project" value="UniProtKB-EC"/>
</dbReference>
<dbReference type="GO" id="GO:0008615">
    <property type="term" value="P:pyridoxine biosynthetic process"/>
    <property type="evidence" value="ECO:0007669"/>
    <property type="project" value="UniProtKB-UniRule"/>
</dbReference>
<dbReference type="CDD" id="cd00003">
    <property type="entry name" value="PNPsynthase"/>
    <property type="match status" value="1"/>
</dbReference>
<dbReference type="FunFam" id="3.20.20.70:FF:000042">
    <property type="entry name" value="Pyridoxine 5'-phosphate synthase"/>
    <property type="match status" value="1"/>
</dbReference>
<dbReference type="Gene3D" id="3.20.20.70">
    <property type="entry name" value="Aldolase class I"/>
    <property type="match status" value="1"/>
</dbReference>
<dbReference type="HAMAP" id="MF_00279">
    <property type="entry name" value="PdxJ"/>
    <property type="match status" value="1"/>
</dbReference>
<dbReference type="InterPro" id="IPR013785">
    <property type="entry name" value="Aldolase_TIM"/>
</dbReference>
<dbReference type="InterPro" id="IPR004569">
    <property type="entry name" value="PyrdxlP_synth_PdxJ"/>
</dbReference>
<dbReference type="InterPro" id="IPR036130">
    <property type="entry name" value="Pyridoxine-5'_phos_synth"/>
</dbReference>
<dbReference type="NCBIfam" id="TIGR00559">
    <property type="entry name" value="pdxJ"/>
    <property type="match status" value="1"/>
</dbReference>
<dbReference type="NCBIfam" id="NF003623">
    <property type="entry name" value="PRK05265.1-1"/>
    <property type="match status" value="1"/>
</dbReference>
<dbReference type="NCBIfam" id="NF003624">
    <property type="entry name" value="PRK05265.1-2"/>
    <property type="match status" value="1"/>
</dbReference>
<dbReference type="NCBIfam" id="NF003625">
    <property type="entry name" value="PRK05265.1-3"/>
    <property type="match status" value="1"/>
</dbReference>
<dbReference type="NCBIfam" id="NF003626">
    <property type="entry name" value="PRK05265.1-4"/>
    <property type="match status" value="1"/>
</dbReference>
<dbReference type="NCBIfam" id="NF003627">
    <property type="entry name" value="PRK05265.1-5"/>
    <property type="match status" value="1"/>
</dbReference>
<dbReference type="PANTHER" id="PTHR30456">
    <property type="entry name" value="PYRIDOXINE 5'-PHOSPHATE SYNTHASE"/>
    <property type="match status" value="1"/>
</dbReference>
<dbReference type="PANTHER" id="PTHR30456:SF0">
    <property type="entry name" value="PYRIDOXINE 5'-PHOSPHATE SYNTHASE"/>
    <property type="match status" value="1"/>
</dbReference>
<dbReference type="Pfam" id="PF03740">
    <property type="entry name" value="PdxJ"/>
    <property type="match status" value="1"/>
</dbReference>
<dbReference type="SUPFAM" id="SSF63892">
    <property type="entry name" value="Pyridoxine 5'-phosphate synthase"/>
    <property type="match status" value="1"/>
</dbReference>
<keyword id="KW-0963">Cytoplasm</keyword>
<keyword id="KW-0664">Pyridoxine biosynthesis</keyword>
<keyword id="KW-1185">Reference proteome</keyword>
<keyword id="KW-0808">Transferase</keyword>
<gene>
    <name evidence="2" type="primary">pdxJ</name>
    <name type="ordered locus">Z3845</name>
    <name type="ordered locus">ECs3430</name>
</gene>
<organism>
    <name type="scientific">Escherichia coli O157:H7</name>
    <dbReference type="NCBI Taxonomy" id="83334"/>
    <lineage>
        <taxon>Bacteria</taxon>
        <taxon>Pseudomonadati</taxon>
        <taxon>Pseudomonadota</taxon>
        <taxon>Gammaproteobacteria</taxon>
        <taxon>Enterobacterales</taxon>
        <taxon>Enterobacteriaceae</taxon>
        <taxon>Escherichia</taxon>
    </lineage>
</organism>
<evidence type="ECO:0000250" key="1"/>
<evidence type="ECO:0000255" key="2">
    <source>
        <dbReference type="HAMAP-Rule" id="MF_00279"/>
    </source>
</evidence>
<name>PDXJ_ECO57</name>
<proteinExistence type="inferred from homology"/>